<dbReference type="GO" id="GO:0005576">
    <property type="term" value="C:extracellular region"/>
    <property type="evidence" value="ECO:0007669"/>
    <property type="project" value="UniProtKB-SubCell"/>
</dbReference>
<dbReference type="GO" id="GO:0042742">
    <property type="term" value="P:defense response to bacterium"/>
    <property type="evidence" value="ECO:0007669"/>
    <property type="project" value="UniProtKB-KW"/>
</dbReference>
<dbReference type="GO" id="GO:0031640">
    <property type="term" value="P:killing of cells of another organism"/>
    <property type="evidence" value="ECO:0007669"/>
    <property type="project" value="UniProtKB-KW"/>
</dbReference>
<organism>
    <name type="scientific">Leptodactylus ocellatus</name>
    <name type="common">Argus frog</name>
    <name type="synonym">Leptodactylus macrosternum</name>
    <dbReference type="NCBI Taxonomy" id="928525"/>
    <lineage>
        <taxon>Eukaryota</taxon>
        <taxon>Metazoa</taxon>
        <taxon>Chordata</taxon>
        <taxon>Craniata</taxon>
        <taxon>Vertebrata</taxon>
        <taxon>Euteleostomi</taxon>
        <taxon>Amphibia</taxon>
        <taxon>Batrachia</taxon>
        <taxon>Anura</taxon>
        <taxon>Neobatrachia</taxon>
        <taxon>Hyloidea</taxon>
        <taxon>Leptodactylidae</taxon>
        <taxon>Leptodactylinae</taxon>
        <taxon>Leptodactylus</taxon>
    </lineage>
</organism>
<comment type="function">
    <text evidence="1">Has hemolytic activity against human erythrocytes (HC50=14.3 uM). Has antibacterial activity against the Gram-positive bacterium S.aureus ATCC 25923 (MIC=64 uM) and the Gram-negative bacterium E.coli ATCC 25922 (MIC=64 uM).</text>
</comment>
<comment type="subcellular location">
    <subcellularLocation>
        <location evidence="1">Secreted</location>
    </subcellularLocation>
</comment>
<comment type="tissue specificity">
    <text evidence="1">Expressed by the skin dorsal glands.</text>
</comment>
<comment type="mass spectrometry"/>
<comment type="similarity">
    <text evidence="2">Belongs to the frog skin active peptide (FSAP) family. Ocellatin subfamily.</text>
</comment>
<comment type="online information" name="The antimicrobial peptide database">
    <link uri="https://wangapd3.com/database/query_output.php?ID=00894"/>
</comment>
<proteinExistence type="evidence at protein level"/>
<accession>P85090</accession>
<feature type="peptide" id="PRO_0000306195" description="Ocellatin-4" evidence="1">
    <location>
        <begin position="1"/>
        <end position="21"/>
    </location>
</feature>
<feature type="modified residue" description="Isoleucine amide" evidence="1">
    <location>
        <position position="21"/>
    </location>
</feature>
<sequence>GLLDFVTGVGKDIFAQLIKQI</sequence>
<name>OCE4_LEPOE</name>
<reference evidence="2" key="1">
    <citation type="journal article" date="2007" name="Toxicon">
        <title>Purification, characterization and homology analysis of ocellatin 4, a cytolytic peptide from the skin secretion of the frog Leptodactylus ocellatus.</title>
        <authorList>
            <person name="Nascimento A.C.C."/>
            <person name="Chapeaurouge A."/>
            <person name="Perales J."/>
            <person name="Sebben A."/>
            <person name="Sousa M.V."/>
            <person name="Fontes W."/>
            <person name="Castro M.S."/>
        </authorList>
    </citation>
    <scope>PROTEIN SEQUENCE</scope>
    <scope>FUNCTION</scope>
    <scope>SUBCELLULAR LOCATION</scope>
    <scope>TISSUE SPECIFICITY</scope>
    <scope>MASS SPECTROMETRY</scope>
    <scope>AMIDATION AT ILE-21</scope>
    <source>
        <tissue evidence="1">Skin secretion</tissue>
    </source>
</reference>
<protein>
    <recommendedName>
        <fullName>Ocellatin-4</fullName>
    </recommendedName>
</protein>
<keyword id="KW-0027">Amidation</keyword>
<keyword id="KW-0878">Amphibian defense peptide</keyword>
<keyword id="KW-0044">Antibiotic</keyword>
<keyword id="KW-0929">Antimicrobial</keyword>
<keyword id="KW-0204">Cytolysis</keyword>
<keyword id="KW-0903">Direct protein sequencing</keyword>
<keyword id="KW-0354">Hemolysis</keyword>
<keyword id="KW-0964">Secreted</keyword>
<evidence type="ECO:0000269" key="1">
    <source>
    </source>
</evidence>
<evidence type="ECO:0000305" key="2"/>